<reference key="1">
    <citation type="journal article" date="2005" name="Nucleic Acids Res.">
        <title>Genome dynamics and diversity of Shigella species, the etiologic agents of bacillary dysentery.</title>
        <authorList>
            <person name="Yang F."/>
            <person name="Yang J."/>
            <person name="Zhang X."/>
            <person name="Chen L."/>
            <person name="Jiang Y."/>
            <person name="Yan Y."/>
            <person name="Tang X."/>
            <person name="Wang J."/>
            <person name="Xiong Z."/>
            <person name="Dong J."/>
            <person name="Xue Y."/>
            <person name="Zhu Y."/>
            <person name="Xu X."/>
            <person name="Sun L."/>
            <person name="Chen S."/>
            <person name="Nie H."/>
            <person name="Peng J."/>
            <person name="Xu J."/>
            <person name="Wang Y."/>
            <person name="Yuan Z."/>
            <person name="Wen Y."/>
            <person name="Yao Z."/>
            <person name="Shen Y."/>
            <person name="Qiang B."/>
            <person name="Hou Y."/>
            <person name="Yu J."/>
            <person name="Jin Q."/>
        </authorList>
    </citation>
    <scope>NUCLEOTIDE SEQUENCE [LARGE SCALE GENOMIC DNA]</scope>
    <source>
        <strain>Sd197</strain>
    </source>
</reference>
<protein>
    <recommendedName>
        <fullName evidence="1">Surface composition regulator</fullName>
    </recommendedName>
</protein>
<feature type="chain" id="PRO_0000264148" description="Surface composition regulator">
    <location>
        <begin position="1"/>
        <end position="66"/>
    </location>
</feature>
<dbReference type="EMBL" id="CP000034">
    <property type="protein sequence ID" value="ABB63236.1"/>
    <property type="molecule type" value="Genomic_DNA"/>
</dbReference>
<dbReference type="RefSeq" id="WP_000401250.1">
    <property type="nucleotide sequence ID" value="NC_007606.1"/>
</dbReference>
<dbReference type="RefSeq" id="YP_404727.1">
    <property type="nucleotide sequence ID" value="NC_007606.1"/>
</dbReference>
<dbReference type="SMR" id="Q32BR9"/>
<dbReference type="STRING" id="300267.SDY_3228"/>
<dbReference type="EnsemblBacteria" id="ABB63236">
    <property type="protein sequence ID" value="ABB63236"/>
    <property type="gene ID" value="SDY_3228"/>
</dbReference>
<dbReference type="KEGG" id="sdy:SDY_3228"/>
<dbReference type="PATRIC" id="fig|300267.13.peg.3854"/>
<dbReference type="HOGENOM" id="CLU_185971_0_0_6"/>
<dbReference type="Proteomes" id="UP000002716">
    <property type="component" value="Chromosome"/>
</dbReference>
<dbReference type="GO" id="GO:1902201">
    <property type="term" value="P:negative regulation of bacterial-type flagellum-dependent cell motility"/>
    <property type="evidence" value="ECO:0007669"/>
    <property type="project" value="UniProtKB-UniRule"/>
</dbReference>
<dbReference type="GO" id="GO:1900191">
    <property type="term" value="P:negative regulation of single-species biofilm formation"/>
    <property type="evidence" value="ECO:0007669"/>
    <property type="project" value="UniProtKB-UniRule"/>
</dbReference>
<dbReference type="FunFam" id="1.20.970.20:FF:000001">
    <property type="entry name" value="Surface composition regulator"/>
    <property type="match status" value="1"/>
</dbReference>
<dbReference type="Gene3D" id="1.20.970.20">
    <property type="entry name" value="Glycogen synthesis protein GlgS"/>
    <property type="match status" value="1"/>
</dbReference>
<dbReference type="HAMAP" id="MF_00525">
    <property type="entry name" value="GlgS"/>
    <property type="match status" value="1"/>
</dbReference>
<dbReference type="InterPro" id="IPR015065">
    <property type="entry name" value="GlgS"/>
</dbReference>
<dbReference type="InterPro" id="IPR036295">
    <property type="entry name" value="GlgS_sf"/>
</dbReference>
<dbReference type="NCBIfam" id="NF002793">
    <property type="entry name" value="PRK02922.1"/>
    <property type="match status" value="1"/>
</dbReference>
<dbReference type="Pfam" id="PF08971">
    <property type="entry name" value="GlgS"/>
    <property type="match status" value="1"/>
</dbReference>
<dbReference type="SUPFAM" id="SSF109747">
    <property type="entry name" value="Glycogen synthesis protein GlgS"/>
    <property type="match status" value="1"/>
</dbReference>
<comment type="function">
    <text evidence="1">Major determinant of cell surface composition. Negatively regulates motility, adhesion and synthesis of biofilm exopolysaccharides.</text>
</comment>
<comment type="similarity">
    <text evidence="1">Belongs to the GlgS family.</text>
</comment>
<gene>
    <name evidence="1" type="primary">glgS</name>
    <name type="ordered locus">SDY_3228</name>
</gene>
<evidence type="ECO:0000255" key="1">
    <source>
        <dbReference type="HAMAP-Rule" id="MF_00525"/>
    </source>
</evidence>
<accession>Q32BR9</accession>
<proteinExistence type="inferred from homology"/>
<organism>
    <name type="scientific">Shigella dysenteriae serotype 1 (strain Sd197)</name>
    <dbReference type="NCBI Taxonomy" id="300267"/>
    <lineage>
        <taxon>Bacteria</taxon>
        <taxon>Pseudomonadati</taxon>
        <taxon>Pseudomonadota</taxon>
        <taxon>Gammaproteobacteria</taxon>
        <taxon>Enterobacterales</taxon>
        <taxon>Enterobacteriaceae</taxon>
        <taxon>Shigella</taxon>
    </lineage>
</organism>
<sequence length="66" mass="7936">MEHSLNSLNNFDFLARSFARMHAEGRPVDILAVTGNMDEEHRTWFCARYAWYCQQMMQTRELELEH</sequence>
<keyword id="KW-1185">Reference proteome</keyword>
<name>GLGS_SHIDS</name>